<evidence type="ECO:0000250" key="1"/>
<evidence type="ECO:0000255" key="2"/>
<evidence type="ECO:0000305" key="3"/>
<feature type="signal peptide" evidence="2">
    <location>
        <begin position="1"/>
        <end position="20"/>
    </location>
</feature>
<feature type="propeptide" id="PRO_0000401569" evidence="1">
    <location>
        <begin position="21"/>
        <end position="41"/>
    </location>
</feature>
<feature type="chain" id="PRO_0000401570" description="U1-lycotoxin-Ls1b">
    <location>
        <begin position="42"/>
        <end position="107"/>
    </location>
</feature>
<feature type="disulfide bond" evidence="1">
    <location>
        <begin position="44"/>
        <end position="59"/>
    </location>
</feature>
<feature type="disulfide bond" evidence="1">
    <location>
        <begin position="51"/>
        <end position="68"/>
    </location>
</feature>
<feature type="disulfide bond" evidence="1">
    <location>
        <begin position="58"/>
        <end position="86"/>
    </location>
</feature>
<feature type="disulfide bond" evidence="1">
    <location>
        <begin position="70"/>
        <end position="84"/>
    </location>
</feature>
<keyword id="KW-1015">Disulfide bond</keyword>
<keyword id="KW-0960">Knottin</keyword>
<keyword id="KW-0964">Secreted</keyword>
<keyword id="KW-0732">Signal</keyword>
<keyword id="KW-0800">Toxin</keyword>
<organism>
    <name type="scientific">Lycosa singoriensis</name>
    <name type="common">Wolf spider</name>
    <name type="synonym">Aranea singoriensis</name>
    <dbReference type="NCBI Taxonomy" id="434756"/>
    <lineage>
        <taxon>Eukaryota</taxon>
        <taxon>Metazoa</taxon>
        <taxon>Ecdysozoa</taxon>
        <taxon>Arthropoda</taxon>
        <taxon>Chelicerata</taxon>
        <taxon>Arachnida</taxon>
        <taxon>Araneae</taxon>
        <taxon>Araneomorphae</taxon>
        <taxon>Entelegynae</taxon>
        <taxon>Lycosoidea</taxon>
        <taxon>Lycosidae</taxon>
        <taxon>Lycosa</taxon>
    </lineage>
</organism>
<sequence>MMKVLVVVALLVTLISYSSSEGIDDLEADELLSLMADEQTRKECIPKHHECTSNKHGCCRGNFFKYKCQCTTVVTQDGEQTERCFCGTPPHHKAAELVVGFGKKIFG</sequence>
<dbReference type="EMBL" id="EU925960">
    <property type="protein sequence ID" value="ACI41292.1"/>
    <property type="molecule type" value="mRNA"/>
</dbReference>
<dbReference type="EMBL" id="FM863964">
    <property type="protein sequence ID" value="CAS03562.1"/>
    <property type="molecule type" value="mRNA"/>
</dbReference>
<dbReference type="SMR" id="B6DCM6"/>
<dbReference type="ArachnoServer" id="AS000884">
    <property type="toxin name" value="U1-lycotoxin-Ls1b"/>
</dbReference>
<dbReference type="GO" id="GO:0005576">
    <property type="term" value="C:extracellular region"/>
    <property type="evidence" value="ECO:0007669"/>
    <property type="project" value="UniProtKB-SubCell"/>
</dbReference>
<dbReference type="GO" id="GO:0090729">
    <property type="term" value="F:toxin activity"/>
    <property type="evidence" value="ECO:0007669"/>
    <property type="project" value="UniProtKB-KW"/>
</dbReference>
<dbReference type="InterPro" id="IPR019553">
    <property type="entry name" value="Spider_toxin_CSTX_knottin"/>
</dbReference>
<dbReference type="InterPro" id="IPR011142">
    <property type="entry name" value="Spider_toxin_CSTX_Knottin_CS"/>
</dbReference>
<dbReference type="Pfam" id="PF10530">
    <property type="entry name" value="Toxin_35"/>
    <property type="match status" value="1"/>
</dbReference>
<dbReference type="PROSITE" id="PS60029">
    <property type="entry name" value="SPIDER_CSTX"/>
    <property type="match status" value="1"/>
</dbReference>
<comment type="subcellular location">
    <subcellularLocation>
        <location evidence="1">Secreted</location>
    </subcellularLocation>
</comment>
<comment type="tissue specificity">
    <text>Expressed by the venom gland.</text>
</comment>
<comment type="domain">
    <text evidence="1">The presence of a 'disulfide through disulfide knot' structurally defines this protein as a knottin.</text>
</comment>
<comment type="similarity">
    <text evidence="3">Belongs to the neurotoxin 19 (CSTX) family. 04 (U1-Lctx) subfamily.</text>
</comment>
<name>TX137_LYCSI</name>
<reference key="1">
    <citation type="journal article" date="2010" name="Zoology">
        <title>Transcriptome analysis of the venom glands of the Chinese wolf spider Lycosa singoriensis.</title>
        <authorList>
            <person name="Zhang Y."/>
            <person name="Chen J."/>
            <person name="Tang X."/>
            <person name="Wang F."/>
            <person name="Jiang L."/>
            <person name="Xiong X."/>
            <person name="Wang M."/>
            <person name="Rong M."/>
            <person name="Liu Z."/>
            <person name="Liang S."/>
        </authorList>
    </citation>
    <scope>NUCLEOTIDE SEQUENCE [LARGE SCALE MRNA]</scope>
    <source>
        <tissue>Venom gland</tissue>
    </source>
</reference>
<proteinExistence type="evidence at transcript level"/>
<accession>B6DCM6</accession>
<protein>
    <recommendedName>
        <fullName>U1-lycotoxin-Ls1b</fullName>
    </recommendedName>
    <alternativeName>
        <fullName>Toxin-like structure LSTX-A37</fullName>
    </alternativeName>
</protein>